<feature type="chain" id="PRO_0000319370" description="Cellulose synthase A catalytic subunit 9 [UDP-forming]">
    <location>
        <begin position="1"/>
        <end position="1055"/>
    </location>
</feature>
<feature type="topological domain" description="Cytoplasmic" evidence="3">
    <location>
        <begin position="1"/>
        <end position="268"/>
    </location>
</feature>
<feature type="transmembrane region" description="Helical" evidence="3">
    <location>
        <begin position="269"/>
        <end position="289"/>
    </location>
</feature>
<feature type="topological domain" description="Extracellular" evidence="3">
    <location>
        <begin position="290"/>
        <end position="291"/>
    </location>
</feature>
<feature type="transmembrane region" description="Helical" evidence="3">
    <location>
        <begin position="292"/>
        <end position="312"/>
    </location>
</feature>
<feature type="topological domain" description="Cytoplasmic" evidence="3">
    <location>
        <begin position="313"/>
        <end position="831"/>
    </location>
</feature>
<feature type="transmembrane region" description="Helical" evidence="3">
    <location>
        <begin position="832"/>
        <end position="852"/>
    </location>
</feature>
<feature type="topological domain" description="Extracellular" evidence="3">
    <location>
        <begin position="853"/>
        <end position="860"/>
    </location>
</feature>
<feature type="transmembrane region" description="Helical" evidence="3">
    <location>
        <begin position="861"/>
        <end position="881"/>
    </location>
</feature>
<feature type="topological domain" description="Cytoplasmic" evidence="3">
    <location>
        <begin position="882"/>
        <end position="899"/>
    </location>
</feature>
<feature type="transmembrane region" description="Helical" evidence="3">
    <location>
        <begin position="900"/>
        <end position="920"/>
    </location>
</feature>
<feature type="topological domain" description="Extracellular" evidence="3">
    <location>
        <begin position="921"/>
        <end position="951"/>
    </location>
</feature>
<feature type="transmembrane region" description="Helical" evidence="3">
    <location>
        <begin position="952"/>
        <end position="972"/>
    </location>
</feature>
<feature type="topological domain" description="Cytoplasmic" evidence="3">
    <location>
        <begin position="973"/>
        <end position="983"/>
    </location>
</feature>
<feature type="transmembrane region" description="Helical" evidence="3">
    <location>
        <begin position="984"/>
        <end position="1004"/>
    </location>
</feature>
<feature type="topological domain" description="Extracellular" evidence="3">
    <location>
        <begin position="1005"/>
        <end position="1013"/>
    </location>
</feature>
<feature type="transmembrane region" description="Helical" evidence="3">
    <location>
        <begin position="1014"/>
        <end position="1034"/>
    </location>
</feature>
<feature type="topological domain" description="Cytoplasmic" evidence="3">
    <location>
        <begin position="1035"/>
        <end position="1055"/>
    </location>
</feature>
<feature type="zinc finger region" description="RING-type; degenerate" evidence="4">
    <location>
        <begin position="37"/>
        <end position="83"/>
    </location>
</feature>
<feature type="coiled-coil region" evidence="3">
    <location>
        <begin position="439"/>
        <end position="468"/>
    </location>
</feature>
<feature type="active site" evidence="3">
    <location>
        <position position="387"/>
    </location>
</feature>
<feature type="active site" evidence="3">
    <location>
        <position position="753"/>
    </location>
</feature>
<feature type="binding site" evidence="2">
    <location>
        <position position="37"/>
    </location>
    <ligand>
        <name>Zn(2+)</name>
        <dbReference type="ChEBI" id="CHEBI:29105"/>
        <label>1</label>
    </ligand>
</feature>
<feature type="binding site" evidence="2">
    <location>
        <position position="40"/>
    </location>
    <ligand>
        <name>Zn(2+)</name>
        <dbReference type="ChEBI" id="CHEBI:29105"/>
        <label>1</label>
    </ligand>
</feature>
<feature type="binding site" evidence="2">
    <location>
        <position position="56"/>
    </location>
    <ligand>
        <name>Zn(2+)</name>
        <dbReference type="ChEBI" id="CHEBI:29105"/>
        <label>2</label>
    </ligand>
</feature>
<feature type="binding site" evidence="2">
    <location>
        <position position="59"/>
    </location>
    <ligand>
        <name>Zn(2+)</name>
        <dbReference type="ChEBI" id="CHEBI:29105"/>
        <label>2</label>
    </ligand>
</feature>
<feature type="binding site" evidence="2">
    <location>
        <position position="64"/>
    </location>
    <ligand>
        <name>Zn(2+)</name>
        <dbReference type="ChEBI" id="CHEBI:29105"/>
        <label>1</label>
    </ligand>
</feature>
<feature type="binding site" evidence="2">
    <location>
        <position position="67"/>
    </location>
    <ligand>
        <name>Zn(2+)</name>
        <dbReference type="ChEBI" id="CHEBI:29105"/>
        <label>1</label>
    </ligand>
</feature>
<feature type="binding site" evidence="2">
    <location>
        <position position="79"/>
    </location>
    <ligand>
        <name>Zn(2+)</name>
        <dbReference type="ChEBI" id="CHEBI:29105"/>
        <label>2</label>
    </ligand>
</feature>
<feature type="binding site" evidence="2">
    <location>
        <position position="82"/>
    </location>
    <ligand>
        <name>Zn(2+)</name>
        <dbReference type="ChEBI" id="CHEBI:29105"/>
        <label>2</label>
    </ligand>
</feature>
<feature type="binding site" evidence="1">
    <location>
        <position position="351"/>
    </location>
    <ligand>
        <name>UDP-alpha-D-glucose</name>
        <dbReference type="ChEBI" id="CHEBI:58885"/>
    </ligand>
</feature>
<feature type="binding site" evidence="1">
    <location>
        <position position="357"/>
    </location>
    <ligand>
        <name>UDP-alpha-D-glucose</name>
        <dbReference type="ChEBI" id="CHEBI:58885"/>
    </ligand>
</feature>
<feature type="binding site" evidence="1">
    <location>
        <position position="358"/>
    </location>
    <ligand>
        <name>UDP-alpha-D-glucose</name>
        <dbReference type="ChEBI" id="CHEBI:58885"/>
    </ligand>
</feature>
<feature type="binding site" evidence="1">
    <location>
        <position position="387"/>
    </location>
    <ligand>
        <name>UDP-alpha-D-glucose</name>
        <dbReference type="ChEBI" id="CHEBI:58885"/>
    </ligand>
</feature>
<feature type="binding site" evidence="1">
    <location>
        <position position="528"/>
    </location>
    <ligand>
        <name>UDP-alpha-D-glucose</name>
        <dbReference type="ChEBI" id="CHEBI:58885"/>
    </ligand>
</feature>
<feature type="binding site" evidence="1">
    <location>
        <position position="529"/>
    </location>
    <ligand>
        <name>Mn(2+)</name>
        <dbReference type="ChEBI" id="CHEBI:29035"/>
    </ligand>
</feature>
<feature type="binding site" evidence="1">
    <location>
        <position position="553"/>
    </location>
    <ligand>
        <name>Mn(2+)</name>
        <dbReference type="ChEBI" id="CHEBI:29035"/>
    </ligand>
</feature>
<feature type="glycosylation site" description="N-linked (GlcNAc...) asparagine" evidence="5">
    <location>
        <position position="927"/>
    </location>
</feature>
<reference key="1">
    <citation type="journal article" date="2005" name="Nature">
        <title>The map-based sequence of the rice genome.</title>
        <authorList>
            <consortium name="International rice genome sequencing project (IRGSP)"/>
        </authorList>
    </citation>
    <scope>NUCLEOTIDE SEQUENCE [LARGE SCALE GENOMIC DNA]</scope>
    <source>
        <strain>cv. Nipponbare</strain>
    </source>
</reference>
<reference key="2">
    <citation type="journal article" date="2008" name="Nucleic Acids Res.">
        <title>The rice annotation project database (RAP-DB): 2008 update.</title>
        <authorList>
            <consortium name="The rice annotation project (RAP)"/>
        </authorList>
    </citation>
    <scope>GENOME REANNOTATION</scope>
    <source>
        <strain>cv. Nipponbare</strain>
    </source>
</reference>
<reference key="3">
    <citation type="journal article" date="2013" name="Rice">
        <title>Improvement of the Oryza sativa Nipponbare reference genome using next generation sequence and optical map data.</title>
        <authorList>
            <person name="Kawahara Y."/>
            <person name="de la Bastide M."/>
            <person name="Hamilton J.P."/>
            <person name="Kanamori H."/>
            <person name="McCombie W.R."/>
            <person name="Ouyang S."/>
            <person name="Schwartz D.C."/>
            <person name="Tanaka T."/>
            <person name="Wu J."/>
            <person name="Zhou S."/>
            <person name="Childs K.L."/>
            <person name="Davidson R.M."/>
            <person name="Lin H."/>
            <person name="Quesada-Ocampo L."/>
            <person name="Vaillancourt B."/>
            <person name="Sakai H."/>
            <person name="Lee S.S."/>
            <person name="Kim J."/>
            <person name="Numa H."/>
            <person name="Itoh T."/>
            <person name="Buell C.R."/>
            <person name="Matsumoto T."/>
        </authorList>
    </citation>
    <scope>GENOME REANNOTATION</scope>
    <source>
        <strain>cv. Nipponbare</strain>
    </source>
</reference>
<reference key="4">
    <citation type="journal article" date="2005" name="PLoS Biol.">
        <title>The genomes of Oryza sativa: a history of duplications.</title>
        <authorList>
            <person name="Yu J."/>
            <person name="Wang J."/>
            <person name="Lin W."/>
            <person name="Li S."/>
            <person name="Li H."/>
            <person name="Zhou J."/>
            <person name="Ni P."/>
            <person name="Dong W."/>
            <person name="Hu S."/>
            <person name="Zeng C."/>
            <person name="Zhang J."/>
            <person name="Zhang Y."/>
            <person name="Li R."/>
            <person name="Xu Z."/>
            <person name="Li S."/>
            <person name="Li X."/>
            <person name="Zheng H."/>
            <person name="Cong L."/>
            <person name="Lin L."/>
            <person name="Yin J."/>
            <person name="Geng J."/>
            <person name="Li G."/>
            <person name="Shi J."/>
            <person name="Liu J."/>
            <person name="Lv H."/>
            <person name="Li J."/>
            <person name="Wang J."/>
            <person name="Deng Y."/>
            <person name="Ran L."/>
            <person name="Shi X."/>
            <person name="Wang X."/>
            <person name="Wu Q."/>
            <person name="Li C."/>
            <person name="Ren X."/>
            <person name="Wang J."/>
            <person name="Wang X."/>
            <person name="Li D."/>
            <person name="Liu D."/>
            <person name="Zhang X."/>
            <person name="Ji Z."/>
            <person name="Zhao W."/>
            <person name="Sun Y."/>
            <person name="Zhang Z."/>
            <person name="Bao J."/>
            <person name="Han Y."/>
            <person name="Dong L."/>
            <person name="Ji J."/>
            <person name="Chen P."/>
            <person name="Wu S."/>
            <person name="Liu J."/>
            <person name="Xiao Y."/>
            <person name="Bu D."/>
            <person name="Tan J."/>
            <person name="Yang L."/>
            <person name="Ye C."/>
            <person name="Zhang J."/>
            <person name="Xu J."/>
            <person name="Zhou Y."/>
            <person name="Yu Y."/>
            <person name="Zhang B."/>
            <person name="Zhuang S."/>
            <person name="Wei H."/>
            <person name="Liu B."/>
            <person name="Lei M."/>
            <person name="Yu H."/>
            <person name="Li Y."/>
            <person name="Xu H."/>
            <person name="Wei S."/>
            <person name="He X."/>
            <person name="Fang L."/>
            <person name="Zhang Z."/>
            <person name="Zhang Y."/>
            <person name="Huang X."/>
            <person name="Su Z."/>
            <person name="Tong W."/>
            <person name="Li J."/>
            <person name="Tong Z."/>
            <person name="Li S."/>
            <person name="Ye J."/>
            <person name="Wang L."/>
            <person name="Fang L."/>
            <person name="Lei T."/>
            <person name="Chen C.-S."/>
            <person name="Chen H.-C."/>
            <person name="Xu Z."/>
            <person name="Li H."/>
            <person name="Huang H."/>
            <person name="Zhang F."/>
            <person name="Xu H."/>
            <person name="Li N."/>
            <person name="Zhao C."/>
            <person name="Li S."/>
            <person name="Dong L."/>
            <person name="Huang Y."/>
            <person name="Li L."/>
            <person name="Xi Y."/>
            <person name="Qi Q."/>
            <person name="Li W."/>
            <person name="Zhang B."/>
            <person name="Hu W."/>
            <person name="Zhang Y."/>
            <person name="Tian X."/>
            <person name="Jiao Y."/>
            <person name="Liang X."/>
            <person name="Jin J."/>
            <person name="Gao L."/>
            <person name="Zheng W."/>
            <person name="Hao B."/>
            <person name="Liu S.-M."/>
            <person name="Wang W."/>
            <person name="Yuan L."/>
            <person name="Cao M."/>
            <person name="McDermott J."/>
            <person name="Samudrala R."/>
            <person name="Wang J."/>
            <person name="Wong G.K.-S."/>
            <person name="Yang H."/>
        </authorList>
    </citation>
    <scope>NUCLEOTIDE SEQUENCE [LARGE SCALE GENOMIC DNA]</scope>
    <source>
        <strain>cv. Nipponbare</strain>
    </source>
</reference>
<reference key="5">
    <citation type="journal article" date="2003" name="Science">
        <title>Collection, mapping, and annotation of over 28,000 cDNA clones from japonica rice.</title>
        <authorList>
            <consortium name="The rice full-length cDNA consortium"/>
        </authorList>
    </citation>
    <scope>NUCLEOTIDE SEQUENCE [LARGE SCALE MRNA]</scope>
    <source>
        <strain>cv. Nipponbare</strain>
    </source>
</reference>
<reference key="6">
    <citation type="journal article" date="2003" name="Plant Physiol.">
        <title>Three distinct rice cellulose synthase catalytic subunit genes required for cellulose synthesis in the secondary wall.</title>
        <authorList>
            <person name="Tanaka K."/>
            <person name="Murata K."/>
            <person name="Yamazaki M."/>
            <person name="Onosato K."/>
            <person name="Miyao A."/>
            <person name="Hirochika H."/>
        </authorList>
    </citation>
    <scope>FUNCTION</scope>
    <scope>DISRUPTION PHENOTYPE</scope>
    <scope>TISSUE SPECIFICITY</scope>
</reference>
<gene>
    <name type="primary">CESA9</name>
    <name type="ordered locus">Os09g0422500</name>
    <name type="ordered locus">LOC_Os09g25490</name>
    <name type="ORF">OJ1740_D06.31</name>
    <name type="ORF">OsJ_028258</name>
    <name type="ORF">P0418B08.2</name>
</gene>
<proteinExistence type="evidence at transcript level"/>
<organism>
    <name type="scientific">Oryza sativa subsp. japonica</name>
    <name type="common">Rice</name>
    <dbReference type="NCBI Taxonomy" id="39947"/>
    <lineage>
        <taxon>Eukaryota</taxon>
        <taxon>Viridiplantae</taxon>
        <taxon>Streptophyta</taxon>
        <taxon>Embryophyta</taxon>
        <taxon>Tracheophyta</taxon>
        <taxon>Spermatophyta</taxon>
        <taxon>Magnoliopsida</taxon>
        <taxon>Liliopsida</taxon>
        <taxon>Poales</taxon>
        <taxon>Poaceae</taxon>
        <taxon>BOP clade</taxon>
        <taxon>Oryzoideae</taxon>
        <taxon>Oryzeae</taxon>
        <taxon>Oryzinae</taxon>
        <taxon>Oryza</taxon>
        <taxon>Oryza sativa</taxon>
    </lineage>
</organism>
<name>CESA9_ORYSJ</name>
<comment type="function">
    <text evidence="2 6">Catalytic subunit of cellulose synthase terminal complexes ('rosettes'), required for beta-1,4-glucan microfibril crystallization, a major mechanism of the cell wall formation (By similarity). Involved in the secondary cell wall formation.</text>
</comment>
<comment type="catalytic activity">
    <reaction evidence="7">
        <text>[(1-&gt;4)-beta-D-glucosyl](n) + UDP-alpha-D-glucose = [(1-&gt;4)-beta-D-glucosyl](n+1) + UDP + H(+)</text>
        <dbReference type="Rhea" id="RHEA:19929"/>
        <dbReference type="Rhea" id="RHEA-COMP:10033"/>
        <dbReference type="Rhea" id="RHEA-COMP:10034"/>
        <dbReference type="ChEBI" id="CHEBI:15378"/>
        <dbReference type="ChEBI" id="CHEBI:18246"/>
        <dbReference type="ChEBI" id="CHEBI:58223"/>
        <dbReference type="ChEBI" id="CHEBI:58885"/>
        <dbReference type="EC" id="2.4.1.12"/>
    </reaction>
</comment>
<comment type="cofactor">
    <cofactor evidence="1">
        <name>Mn(2+)</name>
        <dbReference type="ChEBI" id="CHEBI:29035"/>
    </cofactor>
</comment>
<comment type="cofactor">
    <cofactor evidence="2">
        <name>Zn(2+)</name>
        <dbReference type="ChEBI" id="CHEBI:29105"/>
    </cofactor>
    <text evidence="2">Binds 2 Zn(2+) ions per subunit.</text>
</comment>
<comment type="pathway">
    <text>Glycan metabolism; plant cellulose biosynthesis.</text>
</comment>
<comment type="subcellular location">
    <subcellularLocation>
        <location evidence="7">Cell membrane</location>
        <topology evidence="7">Multi-pass membrane protein</topology>
    </subcellularLocation>
</comment>
<comment type="disruption phenotype">
    <text evidence="6">Plants develop a brittle culm (bc) phenotype with a reduction of up to 90% percent of cellulose content in culm.</text>
</comment>
<comment type="similarity">
    <text evidence="7">Belongs to the glycosyltransferase 2 family. Plant cellulose synthase subfamily.</text>
</comment>
<sequence>MEASAGLVAGSHNRNELVLIRGHEEPKPLRALSGQVCEICGDEVGRTVDGDLFVACNECGFPVCRPCYEYERREGTQNCPQCKTRYKRLKGSPRVPGDEDEEDIDDLEHEFNIDDEKQKQLQQDQDGMQNSHITEAMLHGKMSYGRGPDDGDGNSTPLPPIITGARSVPVSGEFPISNSHGHGEFSSSLHKRIHPYPVSEPGSAKWDEKKEVSWKERMDDWKSKQGIVAGGAPDPDDYDADVPLNDEARQPLSRKVSIASSKVNPYRMVIILRLVVLGFFLRYRILHPVPDAIPLWLTSIICEIWFAVSWILDQFPKWYPIDRETYLDRLSLRYEREGEPSLLSAVDLFVSTVDPLKEPPLVTANTVLSILAVDYPVDKVSCYVSDDGASMLTFESLSETAEFARKWVPFCKKFSIEPRAPEFYFSQKVDYLKDKVHPNFVQERRAMKREYEEFKVRINALVAKAQKVPAEGWIMKDGTPWPGNNTRDHPGMIQVFLGHSGGHDTEGNELPRLVYVSREKRPGFQHHKKAGAMNALIRVSAVLTNAPFMLNLDCDHYINNSKAIREAMCFLMDPQVGRKVCYVQFPQRFDGIDVHDRYANRNTVFFDINMKGLDGIQGPVYVGTGCVFRRQALYGYNPPKGPKRPKMVTCDCCPCFGRKKRKHGKDGLPEAVAADGGMDSDKEMLMSQMNFEKRFGQSAAFVTSTLMEEGGVPPSSSPAALLKEAIHVISCGYEDKTDWGLELGWIYGSITEDILTGFKMHCRGWRSVYCMPKRAAFKGSAPINLSDRLNQVLRWALGSVEIFFSRHSPLLYGYKNGNLKWLERFSYINTTIYPFTSLPLLAYCTLPAVCLLTGKFIMPPISTFASLFFIALFISIFATGILEMRWSGVSIEEWWRNEQFWVIGGVSAHLFAVVQGLLKVLAGIDTNFTVTSKATGDEDDEFAELYAFKWTTLLIPPTTLLILNIIGVVAGVSDAINNGSEAWGPLFGKLFFAFWVIVHLYPFLKGLMGRQNRTPTIVVIWSVLLASIFSLLWVRIDPFTIKARGPDVRQCGINC</sequence>
<accession>Q69P51</accession>
<accession>B7F6V1</accession>
<evidence type="ECO:0000250" key="1">
    <source>
        <dbReference type="UniProtKB" id="Q941L0"/>
    </source>
</evidence>
<evidence type="ECO:0000250" key="2">
    <source>
        <dbReference type="UniProtKB" id="Q9SWW6"/>
    </source>
</evidence>
<evidence type="ECO:0000255" key="3"/>
<evidence type="ECO:0000255" key="4">
    <source>
        <dbReference type="PROSITE-ProRule" id="PRU00175"/>
    </source>
</evidence>
<evidence type="ECO:0000255" key="5">
    <source>
        <dbReference type="PROSITE-ProRule" id="PRU00498"/>
    </source>
</evidence>
<evidence type="ECO:0000269" key="6">
    <source>
    </source>
</evidence>
<evidence type="ECO:0000305" key="7"/>
<protein>
    <recommendedName>
        <fullName>Cellulose synthase A catalytic subunit 9 [UDP-forming]</fullName>
        <ecNumber evidence="7">2.4.1.12</ecNumber>
    </recommendedName>
    <alternativeName>
        <fullName>OsCesA9</fullName>
    </alternativeName>
</protein>
<dbReference type="EC" id="2.4.1.12" evidence="7"/>
<dbReference type="EMBL" id="AP005420">
    <property type="protein sequence ID" value="BAD33412.1"/>
    <property type="molecule type" value="Genomic_DNA"/>
</dbReference>
<dbReference type="EMBL" id="AP005579">
    <property type="protein sequence ID" value="BAD33645.1"/>
    <property type="molecule type" value="Genomic_DNA"/>
</dbReference>
<dbReference type="EMBL" id="AP008215">
    <property type="protein sequence ID" value="BAF25121.1"/>
    <property type="molecule type" value="Genomic_DNA"/>
</dbReference>
<dbReference type="EMBL" id="AP014965">
    <property type="protein sequence ID" value="BAT08137.1"/>
    <property type="molecule type" value="Genomic_DNA"/>
</dbReference>
<dbReference type="EMBL" id="CM000146">
    <property type="protein sequence ID" value="EAZ44775.1"/>
    <property type="molecule type" value="Genomic_DNA"/>
</dbReference>
<dbReference type="EMBL" id="AK121170">
    <property type="protein sequence ID" value="BAH00349.1"/>
    <property type="molecule type" value="mRNA"/>
</dbReference>
<dbReference type="RefSeq" id="XP_015612279.1">
    <property type="nucleotide sequence ID" value="XM_015756793.1"/>
</dbReference>
<dbReference type="SMR" id="Q69P51"/>
<dbReference type="FunCoup" id="Q69P51">
    <property type="interactions" value="196"/>
</dbReference>
<dbReference type="STRING" id="39947.Q69P51"/>
<dbReference type="CAZy" id="GT2">
    <property type="family name" value="Glycosyltransferase Family 2"/>
</dbReference>
<dbReference type="GlyCosmos" id="Q69P51">
    <property type="glycosylation" value="1 site, No reported glycans"/>
</dbReference>
<dbReference type="PaxDb" id="39947-Q69P51"/>
<dbReference type="EnsemblPlants" id="Os09t0422500-01">
    <property type="protein sequence ID" value="Os09t0422500-01"/>
    <property type="gene ID" value="Os09g0422500"/>
</dbReference>
<dbReference type="Gramene" id="Os09t0422500-01">
    <property type="protein sequence ID" value="Os09t0422500-01"/>
    <property type="gene ID" value="Os09g0422500"/>
</dbReference>
<dbReference type="KEGG" id="dosa:Os09g0422500"/>
<dbReference type="eggNOG" id="ENOG502QQXZ">
    <property type="taxonomic scope" value="Eukaryota"/>
</dbReference>
<dbReference type="HOGENOM" id="CLU_001418_0_1_1"/>
<dbReference type="InParanoid" id="Q69P51"/>
<dbReference type="OMA" id="NGQVCEI"/>
<dbReference type="OrthoDB" id="2161379at2759"/>
<dbReference type="PlantReactome" id="R-OSA-1119314">
    <property type="pathway name" value="Cellulose biosynthesis"/>
</dbReference>
<dbReference type="UniPathway" id="UPA00695"/>
<dbReference type="Proteomes" id="UP000000763">
    <property type="component" value="Chromosome 9"/>
</dbReference>
<dbReference type="Proteomes" id="UP000007752">
    <property type="component" value="Chromosome 9"/>
</dbReference>
<dbReference type="Proteomes" id="UP000059680">
    <property type="component" value="Chromosome 9"/>
</dbReference>
<dbReference type="GO" id="GO:0005886">
    <property type="term" value="C:plasma membrane"/>
    <property type="evidence" value="ECO:0000318"/>
    <property type="project" value="GO_Central"/>
</dbReference>
<dbReference type="GO" id="GO:0016760">
    <property type="term" value="F:cellulose synthase (UDP-forming) activity"/>
    <property type="evidence" value="ECO:0007669"/>
    <property type="project" value="UniProtKB-EC"/>
</dbReference>
<dbReference type="GO" id="GO:0016759">
    <property type="term" value="F:cellulose synthase activity"/>
    <property type="evidence" value="ECO:0000318"/>
    <property type="project" value="GO_Central"/>
</dbReference>
<dbReference type="GO" id="GO:0008270">
    <property type="term" value="F:zinc ion binding"/>
    <property type="evidence" value="ECO:0007669"/>
    <property type="project" value="UniProtKB-KW"/>
</dbReference>
<dbReference type="GO" id="GO:0071555">
    <property type="term" value="P:cell wall organization"/>
    <property type="evidence" value="ECO:0007669"/>
    <property type="project" value="UniProtKB-KW"/>
</dbReference>
<dbReference type="GO" id="GO:0030244">
    <property type="term" value="P:cellulose biosynthetic process"/>
    <property type="evidence" value="ECO:0000315"/>
    <property type="project" value="UniProtKB"/>
</dbReference>
<dbReference type="GO" id="GO:0009833">
    <property type="term" value="P:plant-type primary cell wall biogenesis"/>
    <property type="evidence" value="ECO:0000318"/>
    <property type="project" value="GO_Central"/>
</dbReference>
<dbReference type="GO" id="GO:0009834">
    <property type="term" value="P:plant-type secondary cell wall biogenesis"/>
    <property type="evidence" value="ECO:0000315"/>
    <property type="project" value="UniProtKB"/>
</dbReference>
<dbReference type="CDD" id="cd16617">
    <property type="entry name" value="mRING-HC-C4C4_CesA"/>
    <property type="match status" value="1"/>
</dbReference>
<dbReference type="FunFam" id="3.30.40.10:FF:000031">
    <property type="entry name" value="Cellulose synthase"/>
    <property type="match status" value="1"/>
</dbReference>
<dbReference type="FunFam" id="3.90.550.10:FF:000009">
    <property type="entry name" value="Cellulose synthase"/>
    <property type="match status" value="1"/>
</dbReference>
<dbReference type="Gene3D" id="3.90.550.10">
    <property type="entry name" value="Spore Coat Polysaccharide Biosynthesis Protein SpsA, Chain A"/>
    <property type="match status" value="1"/>
</dbReference>
<dbReference type="Gene3D" id="3.30.40.10">
    <property type="entry name" value="Zinc/RING finger domain, C3HC4 (zinc finger)"/>
    <property type="match status" value="1"/>
</dbReference>
<dbReference type="InterPro" id="IPR005150">
    <property type="entry name" value="Cellulose_synth"/>
</dbReference>
<dbReference type="InterPro" id="IPR027934">
    <property type="entry name" value="CES_Znf_RING"/>
</dbReference>
<dbReference type="InterPro" id="IPR029044">
    <property type="entry name" value="Nucleotide-diphossugar_trans"/>
</dbReference>
<dbReference type="InterPro" id="IPR001841">
    <property type="entry name" value="Znf_RING"/>
</dbReference>
<dbReference type="InterPro" id="IPR013083">
    <property type="entry name" value="Znf_RING/FYVE/PHD"/>
</dbReference>
<dbReference type="PANTHER" id="PTHR13301">
    <property type="entry name" value="X-BOX TRANSCRIPTION FACTOR-RELATED"/>
    <property type="match status" value="1"/>
</dbReference>
<dbReference type="Pfam" id="PF03552">
    <property type="entry name" value="Cellulose_synt"/>
    <property type="match status" value="1"/>
</dbReference>
<dbReference type="Pfam" id="PF14569">
    <property type="entry name" value="zf-UDP"/>
    <property type="match status" value="1"/>
</dbReference>
<dbReference type="SUPFAM" id="SSF53448">
    <property type="entry name" value="Nucleotide-diphospho-sugar transferases"/>
    <property type="match status" value="1"/>
</dbReference>
<dbReference type="SUPFAM" id="SSF57850">
    <property type="entry name" value="RING/U-box"/>
    <property type="match status" value="1"/>
</dbReference>
<dbReference type="PROSITE" id="PS50089">
    <property type="entry name" value="ZF_RING_2"/>
    <property type="match status" value="1"/>
</dbReference>
<keyword id="KW-1003">Cell membrane</keyword>
<keyword id="KW-0961">Cell wall biogenesis/degradation</keyword>
<keyword id="KW-0135">Cellulose biosynthesis</keyword>
<keyword id="KW-0175">Coiled coil</keyword>
<keyword id="KW-0325">Glycoprotein</keyword>
<keyword id="KW-0328">Glycosyltransferase</keyword>
<keyword id="KW-0464">Manganese</keyword>
<keyword id="KW-0472">Membrane</keyword>
<keyword id="KW-0479">Metal-binding</keyword>
<keyword id="KW-1185">Reference proteome</keyword>
<keyword id="KW-0808">Transferase</keyword>
<keyword id="KW-0812">Transmembrane</keyword>
<keyword id="KW-1133">Transmembrane helix</keyword>
<keyword id="KW-0862">Zinc</keyword>
<keyword id="KW-0863">Zinc-finger</keyword>